<dbReference type="EC" id="6.1.1.15" evidence="1"/>
<dbReference type="EMBL" id="AE016826">
    <property type="protein sequence ID" value="AAO26952.1"/>
    <property type="molecule type" value="Genomic_DNA"/>
</dbReference>
<dbReference type="RefSeq" id="WP_011091353.1">
    <property type="nucleotide sequence ID" value="NC_004545.1"/>
</dbReference>
<dbReference type="SMR" id="Q89AN7"/>
<dbReference type="STRING" id="224915.bbp_221"/>
<dbReference type="KEGG" id="bab:bbp_221"/>
<dbReference type="eggNOG" id="COG0442">
    <property type="taxonomic scope" value="Bacteria"/>
</dbReference>
<dbReference type="HOGENOM" id="CLU_016739_0_0_6"/>
<dbReference type="OrthoDB" id="9809052at2"/>
<dbReference type="Proteomes" id="UP000000601">
    <property type="component" value="Chromosome"/>
</dbReference>
<dbReference type="GO" id="GO:0005829">
    <property type="term" value="C:cytosol"/>
    <property type="evidence" value="ECO:0007669"/>
    <property type="project" value="TreeGrafter"/>
</dbReference>
<dbReference type="GO" id="GO:0002161">
    <property type="term" value="F:aminoacyl-tRNA deacylase activity"/>
    <property type="evidence" value="ECO:0007669"/>
    <property type="project" value="InterPro"/>
</dbReference>
<dbReference type="GO" id="GO:0005524">
    <property type="term" value="F:ATP binding"/>
    <property type="evidence" value="ECO:0007669"/>
    <property type="project" value="UniProtKB-UniRule"/>
</dbReference>
<dbReference type="GO" id="GO:0004827">
    <property type="term" value="F:proline-tRNA ligase activity"/>
    <property type="evidence" value="ECO:0007669"/>
    <property type="project" value="UniProtKB-UniRule"/>
</dbReference>
<dbReference type="GO" id="GO:0006433">
    <property type="term" value="P:prolyl-tRNA aminoacylation"/>
    <property type="evidence" value="ECO:0007669"/>
    <property type="project" value="UniProtKB-UniRule"/>
</dbReference>
<dbReference type="CDD" id="cd04334">
    <property type="entry name" value="ProRS-INS"/>
    <property type="match status" value="1"/>
</dbReference>
<dbReference type="CDD" id="cd00779">
    <property type="entry name" value="ProRS_core_prok"/>
    <property type="match status" value="1"/>
</dbReference>
<dbReference type="Gene3D" id="3.40.50.800">
    <property type="entry name" value="Anticodon-binding domain"/>
    <property type="match status" value="1"/>
</dbReference>
<dbReference type="Gene3D" id="3.30.930.10">
    <property type="entry name" value="Bira Bifunctional Protein, Domain 2"/>
    <property type="match status" value="2"/>
</dbReference>
<dbReference type="Gene3D" id="3.90.960.10">
    <property type="entry name" value="YbaK/aminoacyl-tRNA synthetase-associated domain"/>
    <property type="match status" value="1"/>
</dbReference>
<dbReference type="HAMAP" id="MF_01569">
    <property type="entry name" value="Pro_tRNA_synth_type1"/>
    <property type="match status" value="1"/>
</dbReference>
<dbReference type="InterPro" id="IPR002314">
    <property type="entry name" value="aa-tRNA-synt_IIb"/>
</dbReference>
<dbReference type="InterPro" id="IPR006195">
    <property type="entry name" value="aa-tRNA-synth_II"/>
</dbReference>
<dbReference type="InterPro" id="IPR045864">
    <property type="entry name" value="aa-tRNA-synth_II/BPL/LPL"/>
</dbReference>
<dbReference type="InterPro" id="IPR004154">
    <property type="entry name" value="Anticodon-bd"/>
</dbReference>
<dbReference type="InterPro" id="IPR036621">
    <property type="entry name" value="Anticodon-bd_dom_sf"/>
</dbReference>
<dbReference type="InterPro" id="IPR002316">
    <property type="entry name" value="Pro-tRNA-ligase_IIa"/>
</dbReference>
<dbReference type="InterPro" id="IPR004500">
    <property type="entry name" value="Pro-tRNA-synth_IIa_bac-type"/>
</dbReference>
<dbReference type="InterPro" id="IPR023717">
    <property type="entry name" value="Pro-tRNA-Synthase_IIa_type1"/>
</dbReference>
<dbReference type="InterPro" id="IPR050062">
    <property type="entry name" value="Pro-tRNA_synthetase"/>
</dbReference>
<dbReference type="InterPro" id="IPR033730">
    <property type="entry name" value="ProRS_core_prok"/>
</dbReference>
<dbReference type="InterPro" id="IPR036754">
    <property type="entry name" value="YbaK/aa-tRNA-synt-asso_dom_sf"/>
</dbReference>
<dbReference type="InterPro" id="IPR007214">
    <property type="entry name" value="YbaK/aa-tRNA-synth-assoc-dom"/>
</dbReference>
<dbReference type="NCBIfam" id="NF006625">
    <property type="entry name" value="PRK09194.1"/>
    <property type="match status" value="1"/>
</dbReference>
<dbReference type="NCBIfam" id="TIGR00409">
    <property type="entry name" value="proS_fam_II"/>
    <property type="match status" value="1"/>
</dbReference>
<dbReference type="PANTHER" id="PTHR42753">
    <property type="entry name" value="MITOCHONDRIAL RIBOSOME PROTEIN L39/PROLYL-TRNA LIGASE FAMILY MEMBER"/>
    <property type="match status" value="1"/>
</dbReference>
<dbReference type="PANTHER" id="PTHR42753:SF2">
    <property type="entry name" value="PROLINE--TRNA LIGASE"/>
    <property type="match status" value="1"/>
</dbReference>
<dbReference type="Pfam" id="PF03129">
    <property type="entry name" value="HGTP_anticodon"/>
    <property type="match status" value="1"/>
</dbReference>
<dbReference type="Pfam" id="PF00587">
    <property type="entry name" value="tRNA-synt_2b"/>
    <property type="match status" value="1"/>
</dbReference>
<dbReference type="Pfam" id="PF04073">
    <property type="entry name" value="tRNA_edit"/>
    <property type="match status" value="1"/>
</dbReference>
<dbReference type="PRINTS" id="PR01046">
    <property type="entry name" value="TRNASYNTHPRO"/>
</dbReference>
<dbReference type="SUPFAM" id="SSF52954">
    <property type="entry name" value="Class II aaRS ABD-related"/>
    <property type="match status" value="1"/>
</dbReference>
<dbReference type="SUPFAM" id="SSF55681">
    <property type="entry name" value="Class II aaRS and biotin synthetases"/>
    <property type="match status" value="1"/>
</dbReference>
<dbReference type="SUPFAM" id="SSF55826">
    <property type="entry name" value="YbaK/ProRS associated domain"/>
    <property type="match status" value="1"/>
</dbReference>
<dbReference type="PROSITE" id="PS50862">
    <property type="entry name" value="AA_TRNA_LIGASE_II"/>
    <property type="match status" value="1"/>
</dbReference>
<gene>
    <name evidence="1" type="primary">proS</name>
    <name type="ordered locus">bbp_221</name>
</gene>
<protein>
    <recommendedName>
        <fullName evidence="1">Proline--tRNA ligase</fullName>
        <ecNumber evidence="1">6.1.1.15</ecNumber>
    </recommendedName>
    <alternativeName>
        <fullName evidence="1">Prolyl-tRNA synthetase</fullName>
        <shortName evidence="1">ProRS</shortName>
    </alternativeName>
</protein>
<feature type="chain" id="PRO_0000139324" description="Proline--tRNA ligase">
    <location>
        <begin position="1"/>
        <end position="574"/>
    </location>
</feature>
<keyword id="KW-0030">Aminoacyl-tRNA synthetase</keyword>
<keyword id="KW-0067">ATP-binding</keyword>
<keyword id="KW-0963">Cytoplasm</keyword>
<keyword id="KW-0436">Ligase</keyword>
<keyword id="KW-0547">Nucleotide-binding</keyword>
<keyword id="KW-0648">Protein biosynthesis</keyword>
<keyword id="KW-1185">Reference proteome</keyword>
<comment type="function">
    <text evidence="1">Catalyzes the attachment of proline to tRNA(Pro) in a two-step reaction: proline is first activated by ATP to form Pro-AMP and then transferred to the acceptor end of tRNA(Pro). As ProRS can inadvertently accommodate and process non-cognate amino acids such as alanine and cysteine, to avoid such errors it has two additional distinct editing activities against alanine. One activity is designated as 'pretransfer' editing and involves the tRNA(Pro)-independent hydrolysis of activated Ala-AMP. The other activity is designated 'posttransfer' editing and involves deacylation of mischarged Ala-tRNA(Pro). The misacylated Cys-tRNA(Pro) is not edited by ProRS.</text>
</comment>
<comment type="catalytic activity">
    <reaction evidence="1">
        <text>tRNA(Pro) + L-proline + ATP = L-prolyl-tRNA(Pro) + AMP + diphosphate</text>
        <dbReference type="Rhea" id="RHEA:14305"/>
        <dbReference type="Rhea" id="RHEA-COMP:9700"/>
        <dbReference type="Rhea" id="RHEA-COMP:9702"/>
        <dbReference type="ChEBI" id="CHEBI:30616"/>
        <dbReference type="ChEBI" id="CHEBI:33019"/>
        <dbReference type="ChEBI" id="CHEBI:60039"/>
        <dbReference type="ChEBI" id="CHEBI:78442"/>
        <dbReference type="ChEBI" id="CHEBI:78532"/>
        <dbReference type="ChEBI" id="CHEBI:456215"/>
        <dbReference type="EC" id="6.1.1.15"/>
    </reaction>
</comment>
<comment type="subunit">
    <text evidence="1">Homodimer.</text>
</comment>
<comment type="subcellular location">
    <subcellularLocation>
        <location evidence="1">Cytoplasm</location>
    </subcellularLocation>
</comment>
<comment type="domain">
    <text evidence="1">Consists of three domains: the N-terminal catalytic domain, the editing domain and the C-terminal anticodon-binding domain.</text>
</comment>
<comment type="similarity">
    <text evidence="1">Belongs to the class-II aminoacyl-tRNA synthetase family. ProS type 1 subfamily.</text>
</comment>
<reference key="1">
    <citation type="journal article" date="2003" name="Proc. Natl. Acad. Sci. U.S.A.">
        <title>Reductive genome evolution in Buchnera aphidicola.</title>
        <authorList>
            <person name="van Ham R.C.H.J."/>
            <person name="Kamerbeek J."/>
            <person name="Palacios C."/>
            <person name="Rausell C."/>
            <person name="Abascal F."/>
            <person name="Bastolla U."/>
            <person name="Fernandez J.M."/>
            <person name="Jimenez L."/>
            <person name="Postigo M."/>
            <person name="Silva F.J."/>
            <person name="Tamames J."/>
            <person name="Viguera E."/>
            <person name="Latorre A."/>
            <person name="Valencia A."/>
            <person name="Moran F."/>
            <person name="Moya A."/>
        </authorList>
    </citation>
    <scope>NUCLEOTIDE SEQUENCE [LARGE SCALE GENOMIC DNA]</scope>
    <source>
        <strain>Bp</strain>
    </source>
</reference>
<name>SYP_BUCBP</name>
<organism>
    <name type="scientific">Buchnera aphidicola subsp. Baizongia pistaciae (strain Bp)</name>
    <dbReference type="NCBI Taxonomy" id="224915"/>
    <lineage>
        <taxon>Bacteria</taxon>
        <taxon>Pseudomonadati</taxon>
        <taxon>Pseudomonadota</taxon>
        <taxon>Gammaproteobacteria</taxon>
        <taxon>Enterobacterales</taxon>
        <taxon>Erwiniaceae</taxon>
        <taxon>Buchnera</taxon>
    </lineage>
</organism>
<evidence type="ECO:0000255" key="1">
    <source>
        <dbReference type="HAMAP-Rule" id="MF_01569"/>
    </source>
</evidence>
<proteinExistence type="inferred from homology"/>
<accession>Q89AN7</accession>
<sequence length="574" mass="66558">MQARKYLFSTLKETPHNSDCISHALMLRAGIIRQNTSGTYIWLPTGLRILKKVIRIIKNEMKQCGAMEIAMPFLQKKNLWDLSKRVITYGQELFQVTDRTNKKFILGPTHEEMITYFIKNELQSYKQLPLILYQIQTKFRDEIRPRFGIIRTKEFMMKDAYSFHINMLSLEKTYNLMYQTYIKIFKKMKLKFYAVEADSGLMGGLKSHEFQAPSNTGEDVIVLSTQSNYLANIQVATSIQNNHIKYSTNNYFKKIKILRNNNDIYKKLSNTPNFKKSNTIKTILVKTKNFSKHLFVAILIREDHTINEYKLSKINEIEYPLIFASKQEILNVTGTTKDFIGPINLDFPVIADFSVINLENFTIGSNITNKYFNNMNWNKDISIPQTYDIRYVLEGDPSPDGAGELKMQKSIEIAHIFQLGKKYSKIMNVKIQNKIGKKDTLIMGCYGIGITRIIAAIIEQNNDKNGIIWPDSIAPFTIAIIPVCFHKSTLVKQQSEKIYNFCKKNNIDALLDDRKQNLSITLSEIELIGIPYSIIISEKLLKNDMVEYRERHKNVKKIINKNHVFKIILNNSLK</sequence>